<accession>Q535K8</accession>
<accession>Q535K7</accession>
<proteinExistence type="evidence at protein level"/>
<protein>
    <recommendedName>
        <fullName>GON-4-like protein</fullName>
    </recommendedName>
    <alternativeName>
        <fullName>GON-4 homolog</fullName>
    </alternativeName>
    <alternativeName>
        <fullName>Protein GON4</fullName>
    </alternativeName>
</protein>
<evidence type="ECO:0000250" key="1">
    <source>
        <dbReference type="UniProtKB" id="Q3T8J9"/>
    </source>
</evidence>
<evidence type="ECO:0000250" key="2">
    <source>
        <dbReference type="UniProtKB" id="Q9DB00"/>
    </source>
</evidence>
<evidence type="ECO:0000255" key="3">
    <source>
        <dbReference type="PROSITE-ProRule" id="PRU00133"/>
    </source>
</evidence>
<evidence type="ECO:0000255" key="4">
    <source>
        <dbReference type="PROSITE-ProRule" id="PRU00810"/>
    </source>
</evidence>
<evidence type="ECO:0000256" key="5">
    <source>
        <dbReference type="SAM" id="MobiDB-lite"/>
    </source>
</evidence>
<evidence type="ECO:0000303" key="6">
    <source ref="1"/>
</evidence>
<evidence type="ECO:0007744" key="7">
    <source>
    </source>
</evidence>
<organism>
    <name type="scientific">Rattus norvegicus</name>
    <name type="common">Rat</name>
    <dbReference type="NCBI Taxonomy" id="10116"/>
    <lineage>
        <taxon>Eukaryota</taxon>
        <taxon>Metazoa</taxon>
        <taxon>Chordata</taxon>
        <taxon>Craniata</taxon>
        <taxon>Vertebrata</taxon>
        <taxon>Euteleostomi</taxon>
        <taxon>Mammalia</taxon>
        <taxon>Eutheria</taxon>
        <taxon>Euarchontoglires</taxon>
        <taxon>Glires</taxon>
        <taxon>Rodentia</taxon>
        <taxon>Myomorpha</taxon>
        <taxon>Muroidea</taxon>
        <taxon>Muridae</taxon>
        <taxon>Murinae</taxon>
        <taxon>Rattus</taxon>
    </lineage>
</organism>
<name>GON4L_RAT</name>
<feature type="chain" id="PRO_0000197111" description="GON-4-like protein">
    <location>
        <begin position="1"/>
        <end position="2256"/>
    </location>
</feature>
<feature type="domain" description="PAH 1" evidence="4">
    <location>
        <begin position="1644"/>
        <end position="1716"/>
    </location>
</feature>
<feature type="domain" description="PAH 2" evidence="4">
    <location>
        <begin position="1726"/>
        <end position="1797"/>
    </location>
</feature>
<feature type="domain" description="Myb-like" evidence="3">
    <location>
        <begin position="2163"/>
        <end position="2216"/>
    </location>
</feature>
<feature type="region of interest" description="Disordered" evidence="5">
    <location>
        <begin position="1"/>
        <end position="56"/>
    </location>
</feature>
<feature type="region of interest" description="Disordered" evidence="5">
    <location>
        <begin position="105"/>
        <end position="213"/>
    </location>
</feature>
<feature type="region of interest" description="Disordered" evidence="5">
    <location>
        <begin position="227"/>
        <end position="266"/>
    </location>
</feature>
<feature type="region of interest" description="Disordered" evidence="5">
    <location>
        <begin position="366"/>
        <end position="428"/>
    </location>
</feature>
<feature type="region of interest" description="Disordered" evidence="5">
    <location>
        <begin position="441"/>
        <end position="460"/>
    </location>
</feature>
<feature type="region of interest" description="Disordered" evidence="5">
    <location>
        <begin position="545"/>
        <end position="573"/>
    </location>
</feature>
<feature type="region of interest" description="Required for interaction with YY1, SIN3A and HDAC1, and transcriptional repression activity" evidence="2">
    <location>
        <begin position="609"/>
        <end position="1363"/>
    </location>
</feature>
<feature type="region of interest" description="Disordered" evidence="5">
    <location>
        <begin position="947"/>
        <end position="969"/>
    </location>
</feature>
<feature type="region of interest" description="Disordered" evidence="5">
    <location>
        <begin position="1078"/>
        <end position="1141"/>
    </location>
</feature>
<feature type="region of interest" description="Disordered" evidence="5">
    <location>
        <begin position="1241"/>
        <end position="1288"/>
    </location>
</feature>
<feature type="region of interest" description="Disordered" evidence="5">
    <location>
        <begin position="1360"/>
        <end position="1620"/>
    </location>
</feature>
<feature type="region of interest" description="Disordered" evidence="5">
    <location>
        <begin position="1831"/>
        <end position="1886"/>
    </location>
</feature>
<feature type="region of interest" description="Disordered" evidence="5">
    <location>
        <begin position="1909"/>
        <end position="1966"/>
    </location>
</feature>
<feature type="region of interest" description="Disordered" evidence="5">
    <location>
        <begin position="2050"/>
        <end position="2078"/>
    </location>
</feature>
<feature type="region of interest" description="Disordered" evidence="5">
    <location>
        <begin position="2110"/>
        <end position="2148"/>
    </location>
</feature>
<feature type="region of interest" description="Disordered" evidence="5">
    <location>
        <begin position="2223"/>
        <end position="2256"/>
    </location>
</feature>
<feature type="compositionally biased region" description="Basic and acidic residues" evidence="5">
    <location>
        <begin position="23"/>
        <end position="35"/>
    </location>
</feature>
<feature type="compositionally biased region" description="Polar residues" evidence="5">
    <location>
        <begin position="40"/>
        <end position="53"/>
    </location>
</feature>
<feature type="compositionally biased region" description="Basic and acidic residues" evidence="5">
    <location>
        <begin position="141"/>
        <end position="176"/>
    </location>
</feature>
<feature type="compositionally biased region" description="Basic residues" evidence="5">
    <location>
        <begin position="242"/>
        <end position="254"/>
    </location>
</feature>
<feature type="compositionally biased region" description="Acidic residues" evidence="5">
    <location>
        <begin position="366"/>
        <end position="395"/>
    </location>
</feature>
<feature type="compositionally biased region" description="Acidic residues" evidence="5">
    <location>
        <begin position="545"/>
        <end position="571"/>
    </location>
</feature>
<feature type="compositionally biased region" description="Low complexity" evidence="5">
    <location>
        <begin position="947"/>
        <end position="959"/>
    </location>
</feature>
<feature type="compositionally biased region" description="Low complexity" evidence="5">
    <location>
        <begin position="1094"/>
        <end position="1115"/>
    </location>
</feature>
<feature type="compositionally biased region" description="Basic residues" evidence="5">
    <location>
        <begin position="1119"/>
        <end position="1135"/>
    </location>
</feature>
<feature type="compositionally biased region" description="Basic and acidic residues" evidence="5">
    <location>
        <begin position="1364"/>
        <end position="1386"/>
    </location>
</feature>
<feature type="compositionally biased region" description="Polar residues" evidence="5">
    <location>
        <begin position="1387"/>
        <end position="1401"/>
    </location>
</feature>
<feature type="compositionally biased region" description="Polar residues" evidence="5">
    <location>
        <begin position="1429"/>
        <end position="1444"/>
    </location>
</feature>
<feature type="compositionally biased region" description="Acidic residues" evidence="5">
    <location>
        <begin position="1475"/>
        <end position="1495"/>
    </location>
</feature>
<feature type="compositionally biased region" description="Low complexity" evidence="5">
    <location>
        <begin position="1496"/>
        <end position="1510"/>
    </location>
</feature>
<feature type="compositionally biased region" description="Acidic residues" evidence="5">
    <location>
        <begin position="1529"/>
        <end position="1553"/>
    </location>
</feature>
<feature type="compositionally biased region" description="Basic residues" evidence="5">
    <location>
        <begin position="1606"/>
        <end position="1620"/>
    </location>
</feature>
<feature type="compositionally biased region" description="Basic and acidic residues" evidence="5">
    <location>
        <begin position="1851"/>
        <end position="1868"/>
    </location>
</feature>
<feature type="compositionally biased region" description="Low complexity" evidence="5">
    <location>
        <begin position="2111"/>
        <end position="2129"/>
    </location>
</feature>
<feature type="modified residue" description="Phosphoserine" evidence="7">
    <location>
        <position position="346"/>
    </location>
</feature>
<feature type="modified residue" description="Phosphoserine" evidence="2">
    <location>
        <position position="783"/>
    </location>
</feature>
<feature type="modified residue" description="Phosphoserine" evidence="1">
    <location>
        <position position="1445"/>
    </location>
</feature>
<feature type="modified residue" description="Phosphoserine" evidence="1">
    <location>
        <position position="1921"/>
    </location>
</feature>
<feature type="modified residue" description="Phosphoserine" evidence="1">
    <location>
        <position position="1994"/>
    </location>
</feature>
<feature type="splice variant" id="VSP_016583" description="In isoform 2." evidence="6">
    <original>F</original>
    <variation>V</variation>
    <location>
        <position position="1820"/>
    </location>
</feature>
<feature type="splice variant" id="VSP_016584" description="In isoform 2." evidence="6">
    <location>
        <begin position="1821"/>
        <end position="2256"/>
    </location>
</feature>
<reference key="1">
    <citation type="submission" date="2004-08" db="EMBL/GenBank/DDBJ databases">
        <title>An anthropoid specific segmental duplication in the human chromosome 1q22: structure and evolution of the affected genes.</title>
        <authorList>
            <person name="Kuryshev V.Y."/>
            <person name="Vorobyov E."/>
            <person name="Zink D."/>
            <person name="Schmitz J."/>
            <person name="Rozhdestvensky T.S."/>
            <person name="Muenstermann E."/>
            <person name="Ernst U."/>
            <person name="Wellenreuther R."/>
            <person name="Moosmayer P."/>
            <person name="Bechtel S."/>
            <person name="Schupp I."/>
            <person name="Horst J."/>
            <person name="Korn B."/>
            <person name="Poustka A."/>
            <person name="Wiemann S."/>
        </authorList>
    </citation>
    <scope>NUCLEOTIDE SEQUENCE [MRNA] (ISOFORMS 1 AND 2)</scope>
    <source>
        <strain>Lewis</strain>
        <tissue>Brain</tissue>
        <tissue>Heart</tissue>
    </source>
</reference>
<reference key="2">
    <citation type="journal article" date="2012" name="Nat. Commun.">
        <title>Quantitative maps of protein phosphorylation sites across 14 different rat organs and tissues.</title>
        <authorList>
            <person name="Lundby A."/>
            <person name="Secher A."/>
            <person name="Lage K."/>
            <person name="Nordsborg N.B."/>
            <person name="Dmytriyev A."/>
            <person name="Lundby C."/>
            <person name="Olsen J.V."/>
        </authorList>
    </citation>
    <scope>PHOSPHORYLATION [LARGE SCALE ANALYSIS] AT SER-346</scope>
    <scope>IDENTIFICATION BY MASS SPECTROMETRY [LARGE SCALE ANALYSIS]</scope>
</reference>
<comment type="function">
    <text evidence="2">Has transcriptional repressor activity, probably as part of a complex with YY1, SIN3A and HDAC1. Required for B cell lymphopoiesis.</text>
</comment>
<comment type="subunit">
    <text evidence="2">Found in a complex with YY1, SIN3A and HDAC1.</text>
</comment>
<comment type="subcellular location">
    <subcellularLocation>
        <location evidence="4">Nucleus</location>
    </subcellularLocation>
</comment>
<comment type="alternative products">
    <event type="alternative splicing"/>
    <isoform>
        <id>Q535K8-1</id>
        <name>1</name>
        <name>GON4L isoform A</name>
        <sequence type="displayed"/>
    </isoform>
    <isoform>
        <id>Q535K8-2</id>
        <name>2</name>
        <name>GON4L isoform B</name>
        <sequence type="described" ref="VSP_016583 VSP_016584"/>
    </isoform>
</comment>
<sequence>MLPCKKRSGVTESAQQQDDQEGEDLHLEAAVKPDTDQLPDCTSESLSWGQSHDSAGCPEVHSMQDVGSQLSVEGTPLSSKMLTQRVNLAVSEAVDVPVSQEIPVPSLESSHSLPVHMGKGRLQSTASRKGKKIAFMPGQVTREDGGDHTVPEEPPSGEHAEEVKAEGGELEMHSEGDLPSLSSGSQSAKPRAQPRKSFQPDGSAFPQEKSLGPLVRQAEEDMEDGGLFIPTEEQDGEESDKRKKTKKGTKRKRDGRGQEQGTMTYDPKVDDMLDRTLEDGAKQHNLTAVNVRNILHEVITNEHVVAMMKAAISETEDMPLFEPKMTRSKLKEVVEKGVVIPTWNISPIKKASETKQPPQFVDIHLEDDDSSDEEYQPDEEEEDETAEESLLESDVESAASSPRGVKRSRLRLSSEAAEADEESGVLSEVEKVATPALRHISAEVVPMGPPPPPKPKQTRDSTFMEKLNAVDEELAASPVCMDSFQPMEDSLIAFRTRSKMPLKDVPLGQLEAELQAPDITPDMYDPNTADDEDWKLWLGGLLNDDVENEDEADDDDDPEYNFLEDLDEPDTEDFRTDRAVRITKKEVNGLMEELFETVQSVVPSKFQDEMGFSNMEDDGPEEEERVTESRPSFNTPQALRFEEPLANLLNERHRTVKELLEQLKMKKSSVRQQPEVEKLKPQTEKVHQTLVLDPAQRSRLQQQMQQHVQLLTQIYLLTTSNPNLSSEASTTRVFLKELGTFAENSTALHQQFNPRFQTLFQPCNWVGAMQLIEDFTHISIDCSPHKTVKKTASEFPCLPKQVAWILATNKVFMYPELLPICSLKANNPRDKTIFTKAEDNLLALGLKHFEGTEFPKPLISKYLVTCKTAHQLTVRIKNLNLNRAPNNVIKFYKKTKQLPVLVRCCEEIQPHQWKPPIEKEEHRLPFWLKASLQSIQEELRNLAGGATAGGSVTAATETSTDQHLQKTSPVVGGDTQYPLLLPKGVVLKLKPGSKRFSRKAWRQKRPLVQKPLLIQPSPSVQPVFNPGKMATWPTQSEVPPSNTVVQIPHLIQPAAVLQTLPGFPSVGVCGEDSFESPAALPAMPSGSEARTSFPWSESQSAPPSSSAPKLMLPSLGPSKFRKPYVRRKPTRRKGAKASPCVKPAPIIHPTPVIFTVPATTVKVVSLGGGCNMIQPVTAAVAPSPQTIPITTLLVNPTSFPCSLNQPLVASSISPLLVSSNPLALPVTSLPEEKAHVSLDIAEGKNAPQNPEPKIKPQEPTPQCATVFSKEEPRSWHPSADTGNQEAVSESSACSWAAVKTEGQEGSSEKSVCGWTVVKTEDGGHAVQPLPQDPQDSLNSPSKDLLNMVKLEAEDCMEEISSDFPKQDIGEEVKEECCMELDRDSPQEKASSVSEMSKQTATPREETQAAKSPTVSQDAPDAIRDASKGLPQSTLSSMDQGTVLNSPPGKPEDSANADGQSVGTPAGTDTGAEKDGAEEEEEEDFDDLTQDEEDELSSASEESVLSVPELQETMEKLTWLASERRMSQEGESEEENSQEENSEPEEEEEEEAEGMETLQKEDEATDEAGGGAAEKPPSTLASPHTAPEVETSITPAGESIKAAGKGRSSHRARSRRGSRARASKDASKLLLLYDEDILDRDPLREQKDLAFAQAYLTRVREALQHIPGKYEDFLQIIYEFESNAQMHSAVDLFKSLQTLLHDWPQLLKDFAAFLLPEQALSCGLFEEQQAFEKSRKFLRQLEICFAENPSHHQKIIKVLQGCADCLPQDITELKTQMWQLLRGHDHLQDEFSIFFDHLRPAANRMGDFEEINWTEEKEYEFDGFEEVILPEVEEEEEPAKVSTASKSKRRKEIGVQHQDKESEWPEAAKDGSCPCHEGGPESKLKKSKRRNCHCSSKVCDSKSYKSKEPLELVGSGPLQEASTVPGTKEAGQGKDMSEEETMEGQENVEVSQNKTGRTTRKGEAPIPGSTVRTALLCSAEVTPIELSLEGPTCCSPETPRLPPQTGAVVCSVRRNQAGPEVVSCLGTSSIPPKEGEDQKAVANSETIAPLPETSETERLPGTVELPAPLPSPVSLSTRDTGRRHIYGKAGTQSWLLDNRAEAKAAHMVAPIRGTSSGASASEAAPTASREGLAEDSETQGKGPEAVLPKASEATVCANNSKVSSTGEKVVLWTREADRVILTMCQEQGAQPHTFSVISQQLGNKTPVEVSHRFRELMQLFHTACEASSEDEDDATSTSNADQLSDHGDLLSEEELDE</sequence>
<keyword id="KW-0025">Alternative splicing</keyword>
<keyword id="KW-0539">Nucleus</keyword>
<keyword id="KW-0597">Phosphoprotein</keyword>
<keyword id="KW-1185">Reference proteome</keyword>
<keyword id="KW-0677">Repeat</keyword>
<keyword id="KW-0678">Repressor</keyword>
<keyword id="KW-0804">Transcription</keyword>
<keyword id="KW-0805">Transcription regulation</keyword>
<dbReference type="EMBL" id="AY724781">
    <property type="protein sequence ID" value="AAW50122.1"/>
    <property type="molecule type" value="mRNA"/>
</dbReference>
<dbReference type="EMBL" id="AY724782">
    <property type="protein sequence ID" value="AAW50123.1"/>
    <property type="molecule type" value="mRNA"/>
</dbReference>
<dbReference type="RefSeq" id="NP_001019968.1">
    <molecule id="Q535K8-1"/>
    <property type="nucleotide sequence ID" value="NM_001024797.1"/>
</dbReference>
<dbReference type="SMR" id="Q535K8"/>
<dbReference type="FunCoup" id="Q535K8">
    <property type="interactions" value="2937"/>
</dbReference>
<dbReference type="STRING" id="10116.ENSRNOP00000071608"/>
<dbReference type="GlyGen" id="Q535K8">
    <property type="glycosylation" value="2 sites"/>
</dbReference>
<dbReference type="iPTMnet" id="Q535K8"/>
<dbReference type="PhosphoSitePlus" id="Q535K8"/>
<dbReference type="jPOST" id="Q535K8"/>
<dbReference type="PaxDb" id="10116-ENSRNOP00000053632"/>
<dbReference type="GeneID" id="499653"/>
<dbReference type="KEGG" id="rno:499653"/>
<dbReference type="UCSC" id="RGD:1564691">
    <molecule id="Q535K8-1"/>
    <property type="organism name" value="rat"/>
</dbReference>
<dbReference type="AGR" id="RGD:1564691"/>
<dbReference type="CTD" id="54856"/>
<dbReference type="RGD" id="1564691">
    <property type="gene designation" value="Gon4l"/>
</dbReference>
<dbReference type="eggNOG" id="ENOG502QT2W">
    <property type="taxonomic scope" value="Eukaryota"/>
</dbReference>
<dbReference type="InParanoid" id="Q535K8"/>
<dbReference type="PhylomeDB" id="Q535K8"/>
<dbReference type="PRO" id="PR:Q535K8"/>
<dbReference type="Proteomes" id="UP000002494">
    <property type="component" value="Unplaced"/>
</dbReference>
<dbReference type="GO" id="GO:0005634">
    <property type="term" value="C:nucleus"/>
    <property type="evidence" value="ECO:0000266"/>
    <property type="project" value="RGD"/>
</dbReference>
<dbReference type="GO" id="GO:0003712">
    <property type="term" value="F:transcription coregulator activity"/>
    <property type="evidence" value="ECO:0000318"/>
    <property type="project" value="GO_Central"/>
</dbReference>
<dbReference type="GO" id="GO:0003714">
    <property type="term" value="F:transcription corepressor activity"/>
    <property type="evidence" value="ECO:0000266"/>
    <property type="project" value="RGD"/>
</dbReference>
<dbReference type="GO" id="GO:0030183">
    <property type="term" value="P:B cell differentiation"/>
    <property type="evidence" value="ECO:0000266"/>
    <property type="project" value="RGD"/>
</dbReference>
<dbReference type="GO" id="GO:0045892">
    <property type="term" value="P:negative regulation of DNA-templated transcription"/>
    <property type="evidence" value="ECO:0000266"/>
    <property type="project" value="RGD"/>
</dbReference>
<dbReference type="GO" id="GO:0006355">
    <property type="term" value="P:regulation of DNA-templated transcription"/>
    <property type="evidence" value="ECO:0000318"/>
    <property type="project" value="GO_Central"/>
</dbReference>
<dbReference type="CDD" id="cd12202">
    <property type="entry name" value="CASP8AP2"/>
    <property type="match status" value="1"/>
</dbReference>
<dbReference type="FunFam" id="1.10.10.60:FF:000191">
    <property type="entry name" value="GON-4-like protein isoform X1"/>
    <property type="match status" value="1"/>
</dbReference>
<dbReference type="FunFam" id="1.20.1160.11:FF:000006">
    <property type="entry name" value="GON-4-like protein isoform X1"/>
    <property type="match status" value="1"/>
</dbReference>
<dbReference type="Gene3D" id="1.10.10.60">
    <property type="entry name" value="Homeodomain-like"/>
    <property type="match status" value="1"/>
</dbReference>
<dbReference type="Gene3D" id="1.20.1160.11">
    <property type="entry name" value="Paired amphipathic helix"/>
    <property type="match status" value="1"/>
</dbReference>
<dbReference type="InterPro" id="IPR049257">
    <property type="entry name" value="Gon4l/CASP8AP2_myb-like"/>
</dbReference>
<dbReference type="InterPro" id="IPR009057">
    <property type="entry name" value="Homeodomain-like_sf"/>
</dbReference>
<dbReference type="InterPro" id="IPR003822">
    <property type="entry name" value="PAH"/>
</dbReference>
<dbReference type="InterPro" id="IPR036600">
    <property type="entry name" value="PAH_sf"/>
</dbReference>
<dbReference type="InterPro" id="IPR001005">
    <property type="entry name" value="SANT/Myb"/>
</dbReference>
<dbReference type="InterPro" id="IPR052435">
    <property type="entry name" value="YY1-Transcr_Regul"/>
</dbReference>
<dbReference type="PANTHER" id="PTHR16088:SF3">
    <property type="entry name" value="GON-4-LIKE PROTEIN"/>
    <property type="match status" value="1"/>
</dbReference>
<dbReference type="PANTHER" id="PTHR16088">
    <property type="entry name" value="YY1 ASSOCIATED PROTEIN-RELATED"/>
    <property type="match status" value="1"/>
</dbReference>
<dbReference type="Pfam" id="PF21227">
    <property type="entry name" value="Myb_DNA-binding_7"/>
    <property type="match status" value="1"/>
</dbReference>
<dbReference type="Pfam" id="PF02671">
    <property type="entry name" value="PAH"/>
    <property type="match status" value="2"/>
</dbReference>
<dbReference type="SUPFAM" id="SSF46689">
    <property type="entry name" value="Homeodomain-like"/>
    <property type="match status" value="1"/>
</dbReference>
<dbReference type="SUPFAM" id="SSF47762">
    <property type="entry name" value="PAH2 domain"/>
    <property type="match status" value="2"/>
</dbReference>
<dbReference type="PROSITE" id="PS50090">
    <property type="entry name" value="MYB_LIKE"/>
    <property type="match status" value="1"/>
</dbReference>
<dbReference type="PROSITE" id="PS51477">
    <property type="entry name" value="PAH"/>
    <property type="match status" value="2"/>
</dbReference>
<gene>
    <name type="primary">Gon4l</name>
    <name type="synonym">Gon4</name>
</gene>